<proteinExistence type="evidence at transcript level"/>
<keyword id="KW-0677">Repeat</keyword>
<keyword id="KW-0964">Secreted</keyword>
<keyword id="KW-0732">Signal</keyword>
<reference key="1">
    <citation type="journal article" date="1992" name="Int. J. Dev. Biol.">
        <title>Isolation and characterization of cDNA encoding a spicule matrix protein in Hemicentrotus pulcherrimus micromeres.</title>
        <authorList>
            <person name="Katoh-Fukui Y."/>
            <person name="Noce T."/>
            <person name="Ueda T."/>
            <person name="Fujiwara Y."/>
            <person name="Hashimoto N."/>
            <person name="Tanaka S."/>
            <person name="Higashinakagawa T."/>
        </authorList>
    </citation>
    <scope>NUCLEOTIDE SEQUENCE [MRNA]</scope>
</reference>
<organism>
    <name type="scientific">Hemicentrotus pulcherrimus</name>
    <name type="common">Sea urchin</name>
    <name type="synonym">Strongylocentrotus pulcherrimus</name>
    <dbReference type="NCBI Taxonomy" id="7650"/>
    <lineage>
        <taxon>Eukaryota</taxon>
        <taxon>Metazoa</taxon>
        <taxon>Echinodermata</taxon>
        <taxon>Eleutherozoa</taxon>
        <taxon>Echinozoa</taxon>
        <taxon>Echinoidea</taxon>
        <taxon>Euechinoidea</taxon>
        <taxon>Echinacea</taxon>
        <taxon>Camarodonta</taxon>
        <taxon>Echinidea</taxon>
        <taxon>Strongylocentrotidae</taxon>
        <taxon>Hemicentrotus</taxon>
    </lineage>
</organism>
<evidence type="ECO:0000250" key="1"/>
<evidence type="ECO:0000255" key="2"/>
<evidence type="ECO:0000255" key="3">
    <source>
        <dbReference type="PROSITE-ProRule" id="PRU00040"/>
    </source>
</evidence>
<evidence type="ECO:0000256" key="4">
    <source>
        <dbReference type="SAM" id="MobiDB-lite"/>
    </source>
</evidence>
<evidence type="ECO:0000305" key="5"/>
<name>SM41_HEMPU</name>
<accession>Q26264</accession>
<comment type="function">
    <text evidence="1">Major matrix protein of the sea urchin embryo spicule which directs crystal growth in certain orientations and inhibit growth in others.</text>
</comment>
<comment type="subcellular location">
    <subcellularLocation>
        <location>Secreted</location>
    </subcellularLocation>
</comment>
<comment type="tissue specificity">
    <text>Expressed specifically in the micromere/primary mesenchyme cells (PMC) lineage.</text>
</comment>
<comment type="developmental stage">
    <text>Appears in gastrulae and remains at a similar level until the pluteus stage.</text>
</comment>
<comment type="domain">
    <text>The repetitive domain may provide a calcite binding matrix.</text>
</comment>
<comment type="similarity">
    <text evidence="5">Belongs to the SM50 family.</text>
</comment>
<protein>
    <recommendedName>
        <fullName>41 kDa spicule matrix protein</fullName>
    </recommendedName>
    <alternativeName>
        <fullName>HPSMC</fullName>
    </alternativeName>
    <alternativeName>
        <fullName>HSM41</fullName>
    </alternativeName>
</protein>
<dbReference type="EMBL" id="S48755">
    <property type="protein sequence ID" value="AAB24285.1"/>
    <property type="molecule type" value="mRNA"/>
</dbReference>
<dbReference type="SMR" id="Q26264"/>
<dbReference type="GO" id="GO:0005576">
    <property type="term" value="C:extracellular region"/>
    <property type="evidence" value="ECO:0007669"/>
    <property type="project" value="UniProtKB-SubCell"/>
</dbReference>
<dbReference type="Gene3D" id="3.10.100.10">
    <property type="entry name" value="Mannose-Binding Protein A, subunit A"/>
    <property type="match status" value="1"/>
</dbReference>
<dbReference type="InterPro" id="IPR001304">
    <property type="entry name" value="C-type_lectin-like"/>
</dbReference>
<dbReference type="InterPro" id="IPR016186">
    <property type="entry name" value="C-type_lectin-like/link_sf"/>
</dbReference>
<dbReference type="InterPro" id="IPR016187">
    <property type="entry name" value="CTDL_fold"/>
</dbReference>
<dbReference type="InterPro" id="IPR009765">
    <property type="entry name" value="Pericardin-like_rpt"/>
</dbReference>
<dbReference type="InterPro" id="IPR052890">
    <property type="entry name" value="SM50_spicule_matrix"/>
</dbReference>
<dbReference type="PANTHER" id="PTHR36148:SF3">
    <property type="entry name" value="50 KDA SPICULE MATRIX PROTEIN"/>
    <property type="match status" value="1"/>
</dbReference>
<dbReference type="PANTHER" id="PTHR36148">
    <property type="entry name" value="50 KDA SPICULE MATRIX PROTEIN-RELATED"/>
    <property type="match status" value="1"/>
</dbReference>
<dbReference type="Pfam" id="PF07054">
    <property type="entry name" value="Pericardin_rpt"/>
    <property type="match status" value="6"/>
</dbReference>
<dbReference type="SMART" id="SM00034">
    <property type="entry name" value="CLECT"/>
    <property type="match status" value="1"/>
</dbReference>
<dbReference type="SUPFAM" id="SSF56436">
    <property type="entry name" value="C-type lectin-like"/>
    <property type="match status" value="1"/>
</dbReference>
<dbReference type="PROSITE" id="PS50041">
    <property type="entry name" value="C_TYPE_LECTIN_2"/>
    <property type="match status" value="1"/>
</dbReference>
<feature type="signal peptide" evidence="2">
    <location>
        <begin position="1"/>
        <end position="17"/>
    </location>
</feature>
<feature type="chain" id="PRO_0000017563" description="41 kDa spicule matrix protein">
    <location>
        <begin position="18"/>
        <end position="407"/>
    </location>
</feature>
<feature type="domain" description="C-type lectin" evidence="3">
    <location>
        <begin position="29"/>
        <end position="160"/>
    </location>
</feature>
<feature type="region of interest" description="Disordered" evidence="4">
    <location>
        <begin position="143"/>
        <end position="176"/>
    </location>
</feature>
<feature type="region of interest" description="Disordered" evidence="4">
    <location>
        <begin position="204"/>
        <end position="407"/>
    </location>
</feature>
<feature type="compositionally biased region" description="Gly residues" evidence="4">
    <location>
        <begin position="223"/>
        <end position="369"/>
    </location>
</feature>
<feature type="compositionally biased region" description="Low complexity" evidence="4">
    <location>
        <begin position="370"/>
        <end position="398"/>
    </location>
</feature>
<sequence length="407" mass="42382">MKGVLFIVASLVAFATGQDCPAYYVRSQSGQSCYRYFNMRVPYRMASEFCEMVTPCGNGPAKMGALASVSSPQENMEIYQLVAGFSQDNQMENEVWLGWNSMSPFFWEDGTPAYPNGFAAFSSSGMAPPRPGAPPSRAWPVNPQNPMSGPPGRAPVMKRQNPPVRPGQGGRQIPQGVGPQWEAVEVTAMRAFVCEVPAGRNVPIGQQPGMGQGFGNQQPGFGNQPGMGGRQPGFGNQPGMGGRQPGFGNQPGMGGRQPGFGNQPGVGGRQPGFGNQPGMGGRQPGFGNQPGVGGRQPGFGNQPGMGGQQPGVGGRQPGFGNQPGMGGNQPGMGGQQPGMGGRQPGVGGRQPGMGGQQPGMGGRQPGMGGQQPNNPNNPNNPNNPNNPNNPNPRFNRPRMLQEADALA</sequence>